<dbReference type="EC" id="3.4.19.12"/>
<dbReference type="EMBL" id="D10699">
    <property type="protein sequence ID" value="BAA01541.1"/>
    <property type="molecule type" value="mRNA"/>
</dbReference>
<dbReference type="EMBL" id="BC060573">
    <property type="protein sequence ID" value="AAH60573.1"/>
    <property type="molecule type" value="mRNA"/>
</dbReference>
<dbReference type="PIR" id="JX0222">
    <property type="entry name" value="JX0222"/>
</dbReference>
<dbReference type="RefSeq" id="NP_058933.2">
    <property type="nucleotide sequence ID" value="NM_017237.4"/>
</dbReference>
<dbReference type="SMR" id="Q00981"/>
<dbReference type="BioGRID" id="248179">
    <property type="interactions" value="5"/>
</dbReference>
<dbReference type="FunCoup" id="Q00981">
    <property type="interactions" value="952"/>
</dbReference>
<dbReference type="IntAct" id="Q00981">
    <property type="interactions" value="2"/>
</dbReference>
<dbReference type="STRING" id="10116.ENSRNOP00000003248"/>
<dbReference type="MEROPS" id="C12.001"/>
<dbReference type="GlyGen" id="Q00981">
    <property type="glycosylation" value="1 site, 1 O-linked glycan (1 site)"/>
</dbReference>
<dbReference type="iPTMnet" id="Q00981"/>
<dbReference type="PhosphoSitePlus" id="Q00981"/>
<dbReference type="SwissPalm" id="Q00981"/>
<dbReference type="jPOST" id="Q00981"/>
<dbReference type="PaxDb" id="10116-ENSRNOP00000003248"/>
<dbReference type="Ensembl" id="ENSRNOT00000094226.1">
    <property type="protein sequence ID" value="ENSRNOP00000086461.1"/>
    <property type="gene ID" value="ENSRNOG00000002343.8"/>
</dbReference>
<dbReference type="GeneID" id="29545"/>
<dbReference type="KEGG" id="rno:29545"/>
<dbReference type="UCSC" id="RGD:3928">
    <property type="organism name" value="rat"/>
</dbReference>
<dbReference type="AGR" id="RGD:3928"/>
<dbReference type="CTD" id="7345"/>
<dbReference type="RGD" id="3928">
    <property type="gene designation" value="Uchl1"/>
</dbReference>
<dbReference type="eggNOG" id="KOG1415">
    <property type="taxonomic scope" value="Eukaryota"/>
</dbReference>
<dbReference type="GeneTree" id="ENSGT00940000157306"/>
<dbReference type="HOGENOM" id="CLU_054406_2_0_1"/>
<dbReference type="InParanoid" id="Q00981"/>
<dbReference type="OMA" id="CISNGEA"/>
<dbReference type="OrthoDB" id="427186at2759"/>
<dbReference type="PhylomeDB" id="Q00981"/>
<dbReference type="BRENDA" id="3.4.19.12">
    <property type="organism ID" value="5301"/>
</dbReference>
<dbReference type="Reactome" id="R-RNO-5689603">
    <property type="pathway name" value="UCH proteinases"/>
</dbReference>
<dbReference type="PRO" id="PR:Q00981"/>
<dbReference type="Proteomes" id="UP000002494">
    <property type="component" value="Chromosome 14"/>
</dbReference>
<dbReference type="Bgee" id="ENSRNOG00000002343">
    <property type="expression patterns" value="Expressed in frontal cortex and 20 other cell types or tissues"/>
</dbReference>
<dbReference type="GO" id="GO:0030424">
    <property type="term" value="C:axon"/>
    <property type="evidence" value="ECO:0000266"/>
    <property type="project" value="RGD"/>
</dbReference>
<dbReference type="GO" id="GO:1904115">
    <property type="term" value="C:axon cytoplasm"/>
    <property type="evidence" value="ECO:0007669"/>
    <property type="project" value="GOC"/>
</dbReference>
<dbReference type="GO" id="GO:0005737">
    <property type="term" value="C:cytoplasm"/>
    <property type="evidence" value="ECO:0000266"/>
    <property type="project" value="RGD"/>
</dbReference>
<dbReference type="GO" id="GO:0005829">
    <property type="term" value="C:cytosol"/>
    <property type="evidence" value="ECO:0000266"/>
    <property type="project" value="RGD"/>
</dbReference>
<dbReference type="GO" id="GO:0005789">
    <property type="term" value="C:endoplasmic reticulum membrane"/>
    <property type="evidence" value="ECO:0007669"/>
    <property type="project" value="UniProtKB-SubCell"/>
</dbReference>
<dbReference type="GO" id="GO:0044306">
    <property type="term" value="C:neuron projection terminus"/>
    <property type="evidence" value="ECO:0000266"/>
    <property type="project" value="RGD"/>
</dbReference>
<dbReference type="GO" id="GO:0043025">
    <property type="term" value="C:neuronal cell body"/>
    <property type="evidence" value="ECO:0000266"/>
    <property type="project" value="RGD"/>
</dbReference>
<dbReference type="GO" id="GO:0005654">
    <property type="term" value="C:nucleoplasm"/>
    <property type="evidence" value="ECO:0007669"/>
    <property type="project" value="Ensembl"/>
</dbReference>
<dbReference type="GO" id="GO:0005886">
    <property type="term" value="C:plasma membrane"/>
    <property type="evidence" value="ECO:0000266"/>
    <property type="project" value="RGD"/>
</dbReference>
<dbReference type="GO" id="GO:0031694">
    <property type="term" value="F:alpha-2A adrenergic receptor binding"/>
    <property type="evidence" value="ECO:0000266"/>
    <property type="project" value="RGD"/>
</dbReference>
<dbReference type="GO" id="GO:0004843">
    <property type="term" value="F:cysteine-type deubiquitinase activity"/>
    <property type="evidence" value="ECO:0000266"/>
    <property type="project" value="RGD"/>
</dbReference>
<dbReference type="GO" id="GO:0004197">
    <property type="term" value="F:cysteine-type endopeptidase activity"/>
    <property type="evidence" value="ECO:0000266"/>
    <property type="project" value="RGD"/>
</dbReference>
<dbReference type="GO" id="GO:0008242">
    <property type="term" value="F:omega peptidase activity"/>
    <property type="evidence" value="ECO:0000266"/>
    <property type="project" value="RGD"/>
</dbReference>
<dbReference type="GO" id="GO:0043022">
    <property type="term" value="F:ribosome binding"/>
    <property type="evidence" value="ECO:0000266"/>
    <property type="project" value="RGD"/>
</dbReference>
<dbReference type="GO" id="GO:0043130">
    <property type="term" value="F:ubiquitin binding"/>
    <property type="evidence" value="ECO:0000266"/>
    <property type="project" value="RGD"/>
</dbReference>
<dbReference type="GO" id="GO:0031625">
    <property type="term" value="F:ubiquitin protein ligase binding"/>
    <property type="evidence" value="ECO:0000266"/>
    <property type="project" value="RGD"/>
</dbReference>
<dbReference type="GO" id="GO:0007628">
    <property type="term" value="P:adult walking behavior"/>
    <property type="evidence" value="ECO:0000266"/>
    <property type="project" value="RGD"/>
</dbReference>
<dbReference type="GO" id="GO:0007412">
    <property type="term" value="P:axon target recognition"/>
    <property type="evidence" value="ECO:0000266"/>
    <property type="project" value="RGD"/>
</dbReference>
<dbReference type="GO" id="GO:0019896">
    <property type="term" value="P:axonal transport of mitochondrion"/>
    <property type="evidence" value="ECO:0000266"/>
    <property type="project" value="RGD"/>
</dbReference>
<dbReference type="GO" id="GO:0007409">
    <property type="term" value="P:axonogenesis"/>
    <property type="evidence" value="ECO:0000266"/>
    <property type="project" value="RGD"/>
</dbReference>
<dbReference type="GO" id="GO:0071466">
    <property type="term" value="P:cellular response to xenobiotic stimulus"/>
    <property type="evidence" value="ECO:0000266"/>
    <property type="project" value="RGD"/>
</dbReference>
<dbReference type="GO" id="GO:0042755">
    <property type="term" value="P:eating behavior"/>
    <property type="evidence" value="ECO:0000266"/>
    <property type="project" value="RGD"/>
</dbReference>
<dbReference type="GO" id="GO:0002176">
    <property type="term" value="P:male germ cell proliferation"/>
    <property type="evidence" value="ECO:0000266"/>
    <property type="project" value="RGD"/>
</dbReference>
<dbReference type="GO" id="GO:0055001">
    <property type="term" value="P:muscle cell development"/>
    <property type="evidence" value="ECO:0000266"/>
    <property type="project" value="RGD"/>
</dbReference>
<dbReference type="GO" id="GO:0050905">
    <property type="term" value="P:neuromuscular process"/>
    <property type="evidence" value="ECO:0000266"/>
    <property type="project" value="RGD"/>
</dbReference>
<dbReference type="GO" id="GO:0045821">
    <property type="term" value="P:positive regulation of glycolytic process"/>
    <property type="evidence" value="ECO:0000266"/>
    <property type="project" value="RGD"/>
</dbReference>
<dbReference type="GO" id="GO:0030163">
    <property type="term" value="P:protein catabolic process"/>
    <property type="evidence" value="ECO:0000318"/>
    <property type="project" value="GO_Central"/>
</dbReference>
<dbReference type="GO" id="GO:0016579">
    <property type="term" value="P:protein deubiquitination"/>
    <property type="evidence" value="ECO:0000266"/>
    <property type="project" value="RGD"/>
</dbReference>
<dbReference type="GO" id="GO:0002931">
    <property type="term" value="P:response to ischemia"/>
    <property type="evidence" value="ECO:0000266"/>
    <property type="project" value="RGD"/>
</dbReference>
<dbReference type="GO" id="GO:0006511">
    <property type="term" value="P:ubiquitin-dependent protein catabolic process"/>
    <property type="evidence" value="ECO:0000314"/>
    <property type="project" value="RGD"/>
</dbReference>
<dbReference type="CDD" id="cd09616">
    <property type="entry name" value="Peptidase_C12_UCH_L1_L3"/>
    <property type="match status" value="1"/>
</dbReference>
<dbReference type="FunFam" id="3.40.532.10:FF:000004">
    <property type="entry name" value="Ubiquitin carboxyl-terminal hydrolase"/>
    <property type="match status" value="1"/>
</dbReference>
<dbReference type="Gene3D" id="3.40.532.10">
    <property type="entry name" value="Peptidase C12, ubiquitin carboxyl-terminal hydrolase"/>
    <property type="match status" value="1"/>
</dbReference>
<dbReference type="InterPro" id="IPR038765">
    <property type="entry name" value="Papain-like_cys_pep_sf"/>
</dbReference>
<dbReference type="InterPro" id="IPR001578">
    <property type="entry name" value="Peptidase_C12_UCH"/>
</dbReference>
<dbReference type="InterPro" id="IPR036959">
    <property type="entry name" value="Peptidase_C12_UCH_sf"/>
</dbReference>
<dbReference type="InterPro" id="IPR057254">
    <property type="entry name" value="UCH_AS"/>
</dbReference>
<dbReference type="PANTHER" id="PTHR10589">
    <property type="entry name" value="UBIQUITIN CARBOXYL-TERMINAL HYDROLASE"/>
    <property type="match status" value="1"/>
</dbReference>
<dbReference type="PANTHER" id="PTHR10589:SF19">
    <property type="entry name" value="UBIQUITIN CARBOXYL-TERMINAL HYDROLASE ISOZYME L1"/>
    <property type="match status" value="1"/>
</dbReference>
<dbReference type="Pfam" id="PF01088">
    <property type="entry name" value="Peptidase_C12"/>
    <property type="match status" value="1"/>
</dbReference>
<dbReference type="PRINTS" id="PR00707">
    <property type="entry name" value="UBCTHYDRLASE"/>
</dbReference>
<dbReference type="SUPFAM" id="SSF54001">
    <property type="entry name" value="Cysteine proteinases"/>
    <property type="match status" value="1"/>
</dbReference>
<dbReference type="PROSITE" id="PS00140">
    <property type="entry name" value="UCH_1"/>
    <property type="match status" value="1"/>
</dbReference>
<dbReference type="PROSITE" id="PS52048">
    <property type="entry name" value="UCH_DOMAIN"/>
    <property type="match status" value="1"/>
</dbReference>
<organism>
    <name type="scientific">Rattus norvegicus</name>
    <name type="common">Rat</name>
    <dbReference type="NCBI Taxonomy" id="10116"/>
    <lineage>
        <taxon>Eukaryota</taxon>
        <taxon>Metazoa</taxon>
        <taxon>Chordata</taxon>
        <taxon>Craniata</taxon>
        <taxon>Vertebrata</taxon>
        <taxon>Euteleostomi</taxon>
        <taxon>Mammalia</taxon>
        <taxon>Eutheria</taxon>
        <taxon>Euarchontoglires</taxon>
        <taxon>Glires</taxon>
        <taxon>Rodentia</taxon>
        <taxon>Myomorpha</taxon>
        <taxon>Muroidea</taxon>
        <taxon>Muridae</taxon>
        <taxon>Murinae</taxon>
        <taxon>Rattus</taxon>
    </lineage>
</organism>
<comment type="function">
    <text evidence="2 3">Ubiquitin-protein hydrolase involved both in the processing of ubiquitin precursors and of ubiquitinated proteins (By similarity). This enzyme is a thiol protease that recognizes and hydrolyzes a peptide bond at the C-terminal glycine of ubiquitin (By similarity). Also binds to free monoubiquitin and may prevent its degradation in lysosomes (By similarity). The homodimer may have ATP-independent ubiquitin ligase activity (By similarity).</text>
</comment>
<comment type="catalytic activity">
    <reaction evidence="2">
        <text>Thiol-dependent hydrolysis of ester, thioester, amide, peptide and isopeptide bonds formed by the C-terminal Gly of ubiquitin (a 76-residue protein attached to proteins as an intracellular targeting signal).</text>
        <dbReference type="EC" id="3.4.19.12"/>
    </reaction>
</comment>
<comment type="subunit">
    <text evidence="1 7">Monomer. Homodimer. Interacts with COPS5 (By similarity). Interacts with SNCA.</text>
</comment>
<comment type="subcellular location">
    <subcellularLocation>
        <location>Cytoplasm</location>
    </subcellularLocation>
    <subcellularLocation>
        <location evidence="1">Endoplasmic reticulum membrane</location>
        <topology evidence="1">Lipid-anchor</topology>
    </subcellularLocation>
</comment>
<comment type="PTM">
    <text evidence="6">O-glycosylated.</text>
</comment>
<comment type="miscellaneous">
    <text evidence="1">In contrast to UCHL3, does not hydrolyze a peptide bond at the C-terminal glycine of NEDD8.</text>
</comment>
<comment type="similarity">
    <text evidence="8">Belongs to the peptidase C12 family.</text>
</comment>
<comment type="caution">
    <text evidence="2">The homodimer may have ATP-independent ubiquitin ligase activity. However, in another study, UCHL1 was shown to lack ubiquitin ligase activity.</text>
</comment>
<keyword id="KW-0007">Acetylation</keyword>
<keyword id="KW-0963">Cytoplasm</keyword>
<keyword id="KW-0903">Direct protein sequencing</keyword>
<keyword id="KW-0256">Endoplasmic reticulum</keyword>
<keyword id="KW-0325">Glycoprotein</keyword>
<keyword id="KW-0378">Hydrolase</keyword>
<keyword id="KW-0449">Lipoprotein</keyword>
<keyword id="KW-0472">Membrane</keyword>
<keyword id="KW-0597">Phosphoprotein</keyword>
<keyword id="KW-0636">Prenylation</keyword>
<keyword id="KW-0645">Protease</keyword>
<keyword id="KW-1185">Reference proteome</keyword>
<keyword id="KW-0788">Thiol protease</keyword>
<keyword id="KW-0833">Ubl conjugation pathway</keyword>
<protein>
    <recommendedName>
        <fullName>Ubiquitin carboxyl-terminal hydrolase isozyme L1</fullName>
        <shortName evidence="2">UCH-L1</shortName>
        <ecNumber>3.4.19.12</ecNumber>
    </recommendedName>
    <alternativeName>
        <fullName>Neuron cytoplasmic protein 9.5</fullName>
    </alternativeName>
    <alternativeName>
        <fullName>PGP 9.5</fullName>
        <shortName>PGP9.5</shortName>
    </alternativeName>
    <alternativeName>
        <fullName>Ubiquitin thioesterase L1</fullName>
    </alternativeName>
</protein>
<sequence>MQLKPMEINPEMLNKVLAKLGVAGQWRFADVLGLEEETLGSVPSPACALLLLFPLTAQHENFRKKQIEELKGQEVSPKVYFMKQTIGNSCGTIGLIHAVANNQDKLEFEDGSVLKQFLSETEKLSPEDRAKCFEKNEAIQAAHDSVAQEGQCRVDDKVNFHFILFNNVDGHLYELDGRMPFPVNHGASSEDSLLQDAAKVCREFTEREQGEVRFSAVALCKAA</sequence>
<name>UCHL1_RAT</name>
<feature type="chain" id="PRO_0000211060" description="Ubiquitin carboxyl-terminal hydrolase isozyme L1">
    <location>
        <begin position="1"/>
        <end position="220"/>
    </location>
</feature>
<feature type="propeptide" id="PRO_0000414315" description="Removed in mature form" evidence="1">
    <location>
        <begin position="221"/>
        <end position="223"/>
    </location>
</feature>
<feature type="domain" description="UCH catalytic" evidence="4">
    <location>
        <begin position="2"/>
        <end position="221"/>
    </location>
</feature>
<feature type="region of interest" description="Interaction with ubiquitin" evidence="2">
    <location>
        <begin position="5"/>
        <end position="10"/>
    </location>
</feature>
<feature type="region of interest" description="Interaction with ubiquitin" evidence="2">
    <location>
        <begin position="211"/>
        <end position="216"/>
    </location>
</feature>
<feature type="active site" description="Nucleophile" evidence="4 5">
    <location>
        <position position="90"/>
    </location>
</feature>
<feature type="active site" description="Proton donor" evidence="4">
    <location>
        <position position="161"/>
    </location>
</feature>
<feature type="site" description="Transition state stabilizer" evidence="4">
    <location>
        <position position="84"/>
    </location>
</feature>
<feature type="site" description="Important for enzyme activity" evidence="4">
    <location>
        <position position="176"/>
    </location>
</feature>
<feature type="modified residue" description="N-acetylmethionine" evidence="2">
    <location>
        <position position="1"/>
    </location>
</feature>
<feature type="modified residue" description="Phosphoserine" evidence="9">
    <location>
        <position position="125"/>
    </location>
</feature>
<feature type="lipid moiety-binding region" description="S-farnesyl cysteine" evidence="2">
    <location>
        <position position="220"/>
    </location>
</feature>
<feature type="sequence conflict" description="In Ref. 1; BAA01541." evidence="8" ref="1">
    <original>T</original>
    <variation>I</variation>
    <location>
        <position position="38"/>
    </location>
</feature>
<feature type="sequence conflict" description="In Ref. 1; BAA01541." evidence="8" ref="1">
    <original>I</original>
    <variation>M</variation>
    <location>
        <position position="96"/>
    </location>
</feature>
<feature type="sequence conflict" description="In Ref. 1; BAA01541." evidence="8" ref="1">
    <original>KLE</original>
    <variation>NLG</variation>
    <location>
        <begin position="105"/>
        <end position="107"/>
    </location>
</feature>
<evidence type="ECO:0000250" key="1"/>
<evidence type="ECO:0000250" key="2">
    <source>
        <dbReference type="UniProtKB" id="P09936"/>
    </source>
</evidence>
<evidence type="ECO:0000250" key="3">
    <source>
        <dbReference type="UniProtKB" id="Q9R0P9"/>
    </source>
</evidence>
<evidence type="ECO:0000255" key="4">
    <source>
        <dbReference type="PROSITE-ProRule" id="PRU01393"/>
    </source>
</evidence>
<evidence type="ECO:0000255" key="5">
    <source>
        <dbReference type="PROSITE-ProRule" id="PRU10091"/>
    </source>
</evidence>
<evidence type="ECO:0000269" key="6">
    <source>
    </source>
</evidence>
<evidence type="ECO:0000269" key="7">
    <source>
    </source>
</evidence>
<evidence type="ECO:0000305" key="8"/>
<evidence type="ECO:0007744" key="9">
    <source>
    </source>
</evidence>
<gene>
    <name type="primary">Uchl1</name>
</gene>
<reference key="1">
    <citation type="journal article" date="1992" name="J. Biochem.">
        <title>cDNA cloning and tissue distribution of a rat ubiquitin carboxyl-terminal hydrolase PGP9.5.</title>
        <authorList>
            <person name="Kajimoto Y."/>
            <person name="Hashimoto T."/>
            <person name="Shirai Y."/>
            <person name="Nishino N."/>
            <person name="Kuno T."/>
            <person name="Tanaka C."/>
        </authorList>
    </citation>
    <scope>NUCLEOTIDE SEQUENCE [MRNA]</scope>
    <source>
        <tissue>Brain</tissue>
    </source>
</reference>
<reference key="2">
    <citation type="journal article" date="2004" name="Genome Res.">
        <title>The status, quality, and expansion of the NIH full-length cDNA project: the Mammalian Gene Collection (MGC).</title>
        <authorList>
            <consortium name="The MGC Project Team"/>
        </authorList>
    </citation>
    <scope>NUCLEOTIDE SEQUENCE [LARGE SCALE MRNA]</scope>
    <source>
        <tissue>Pituitary</tissue>
    </source>
</reference>
<reference key="3">
    <citation type="submission" date="2007-07" db="UniProtKB">
        <authorList>
            <person name="Lubec G."/>
            <person name="Boddul S."/>
            <person name="Afjehi-Sadat L."/>
            <person name="Kang S.U."/>
        </authorList>
    </citation>
    <scope>PROTEIN SEQUENCE OF 20-27; 84-123 AND 132-199</scope>
    <scope>IDENTIFICATION BY MASS SPECTROMETRY</scope>
    <source>
        <strain>Sprague-Dawley</strain>
        <tissue>Brain</tissue>
        <tissue>Spinal cord</tissue>
    </source>
</reference>
<reference key="4">
    <citation type="journal article" date="2001" name="J. Neurochem.">
        <title>Cytosolic O-glycosylation is abundant in nerve terminals.</title>
        <authorList>
            <person name="Cole R.N."/>
            <person name="Hart G.W."/>
        </authorList>
    </citation>
    <scope>GLYCOSYLATION</scope>
    <scope>IDENTIFICATION BY MASS SPECTROMETRY</scope>
</reference>
<reference key="5">
    <citation type="journal article" date="2002" name="Cell">
        <title>The UCH-L1 gene encodes two opposing enzymatic activities that affect alpha-synuclein degradation and Parkinson's disease susceptibility.</title>
        <authorList>
            <person name="Liu Y."/>
            <person name="Fallon L."/>
            <person name="Lashuel H.A."/>
            <person name="Liu Z."/>
            <person name="Lansbury P.T. Jr."/>
        </authorList>
    </citation>
    <scope>INTERACTION WITH SNCA</scope>
</reference>
<reference key="6">
    <citation type="journal article" date="2012" name="Nat. Commun.">
        <title>Quantitative maps of protein phosphorylation sites across 14 different rat organs and tissues.</title>
        <authorList>
            <person name="Lundby A."/>
            <person name="Secher A."/>
            <person name="Lage K."/>
            <person name="Nordsborg N.B."/>
            <person name="Dmytriyev A."/>
            <person name="Lundby C."/>
            <person name="Olsen J.V."/>
        </authorList>
    </citation>
    <scope>PHOSPHORYLATION [LARGE SCALE ANALYSIS] AT SER-125</scope>
    <scope>IDENTIFICATION BY MASS SPECTROMETRY [LARGE SCALE ANALYSIS]</scope>
</reference>
<proteinExistence type="evidence at protein level"/>
<accession>Q00981</accession>
<accession>Q6P9V8</accession>